<sequence length="152" mass="17321">MTTMLKTQVHVVVIYLLIQIAFSQVKPGSDLKWSTLKSVVTITNRLGDGSTLKLHCKSADDDLGLKILAPNGSWSFKFRPSIVPGVTLFFCHFTWPGQSKWFNIYDDDRDGVRMGIPCIYCIWDIGKYGPCRFSEIDDAFNICYDWNGNRRS</sequence>
<dbReference type="EMBL" id="AB007727">
    <property type="protein sequence ID" value="BAB10025.1"/>
    <property type="status" value="ALT_INIT"/>
    <property type="molecule type" value="Genomic_DNA"/>
</dbReference>
<dbReference type="EMBL" id="CP002688">
    <property type="protein sequence ID" value="AED91758.1"/>
    <property type="molecule type" value="Genomic_DNA"/>
</dbReference>
<dbReference type="RefSeq" id="NP_196768.2">
    <property type="nucleotide sequence ID" value="NM_121245.2"/>
</dbReference>
<dbReference type="SMR" id="F4JZG1"/>
<dbReference type="STRING" id="3702.F4JZG1"/>
<dbReference type="GlyCosmos" id="F4JZG1">
    <property type="glycosylation" value="1 site, No reported glycans"/>
</dbReference>
<dbReference type="GlyGen" id="F4JZG1">
    <property type="glycosylation" value="1 site"/>
</dbReference>
<dbReference type="PaxDb" id="3702-AT5G12070.1"/>
<dbReference type="ProteomicsDB" id="232573"/>
<dbReference type="EnsemblPlants" id="AT5G12070.1">
    <property type="protein sequence ID" value="AT5G12070.1"/>
    <property type="gene ID" value="AT5G12070"/>
</dbReference>
<dbReference type="GeneID" id="831080"/>
<dbReference type="Gramene" id="AT5G12070.1">
    <property type="protein sequence ID" value="AT5G12070.1"/>
    <property type="gene ID" value="AT5G12070"/>
</dbReference>
<dbReference type="KEGG" id="ath:AT5G12070"/>
<dbReference type="Araport" id="AT5G12070"/>
<dbReference type="TAIR" id="AT5G12070"/>
<dbReference type="eggNOG" id="ENOG502S7CQ">
    <property type="taxonomic scope" value="Eukaryota"/>
</dbReference>
<dbReference type="HOGENOM" id="CLU_125658_0_1_1"/>
<dbReference type="InParanoid" id="F4JZG1"/>
<dbReference type="OMA" id="DAFNICY"/>
<dbReference type="OrthoDB" id="1900999at2759"/>
<dbReference type="PRO" id="PR:F4JZG1"/>
<dbReference type="Proteomes" id="UP000006548">
    <property type="component" value="Chromosome 5"/>
</dbReference>
<dbReference type="ExpressionAtlas" id="F4JZG1">
    <property type="expression patterns" value="baseline"/>
</dbReference>
<dbReference type="GO" id="GO:0005576">
    <property type="term" value="C:extracellular region"/>
    <property type="evidence" value="ECO:0007669"/>
    <property type="project" value="UniProtKB-SubCell"/>
</dbReference>
<dbReference type="GO" id="GO:0060320">
    <property type="term" value="P:rejection of self pollen"/>
    <property type="evidence" value="ECO:0007669"/>
    <property type="project" value="UniProtKB-KW"/>
</dbReference>
<dbReference type="InterPro" id="IPR010264">
    <property type="entry name" value="Self-incomp_S1"/>
</dbReference>
<dbReference type="PANTHER" id="PTHR31232">
    <property type="match status" value="1"/>
</dbReference>
<dbReference type="PANTHER" id="PTHR31232:SF43">
    <property type="entry name" value="S-PROTEIN HOMOLOG 29-RELATED"/>
    <property type="match status" value="1"/>
</dbReference>
<dbReference type="Pfam" id="PF05938">
    <property type="entry name" value="Self-incomp_S1"/>
    <property type="match status" value="1"/>
</dbReference>
<accession>F4JZG1</accession>
<accession>Q9FMQ3</accession>
<gene>
    <name evidence="3" type="primary">SPH4</name>
    <name evidence="6" type="ordered locus">At5g12070</name>
    <name evidence="4" type="ORF">F14F18</name>
</gene>
<protein>
    <recommendedName>
        <fullName evidence="3">S-protein homolog 4</fullName>
    </recommendedName>
</protein>
<reference key="1">
    <citation type="journal article" date="1997" name="DNA Res.">
        <title>Structural analysis of Arabidopsis thaliana chromosome 5. III. Sequence features of the regions of 1,191,918 bp covered by seventeen physically assigned P1 clones.</title>
        <authorList>
            <person name="Nakamura Y."/>
            <person name="Sato S."/>
            <person name="Kaneko T."/>
            <person name="Kotani H."/>
            <person name="Asamizu E."/>
            <person name="Miyajima N."/>
            <person name="Tabata S."/>
        </authorList>
    </citation>
    <scope>NUCLEOTIDE SEQUENCE [LARGE SCALE GENOMIC DNA]</scope>
    <source>
        <strain>cv. Columbia</strain>
    </source>
</reference>
<reference key="2">
    <citation type="journal article" date="2017" name="Plant J.">
        <title>Araport11: a complete reannotation of the Arabidopsis thaliana reference genome.</title>
        <authorList>
            <person name="Cheng C.Y."/>
            <person name="Krishnakumar V."/>
            <person name="Chan A.P."/>
            <person name="Thibaud-Nissen F."/>
            <person name="Schobel S."/>
            <person name="Town C.D."/>
        </authorList>
    </citation>
    <scope>GENOME REANNOTATION</scope>
    <source>
        <strain>cv. Columbia</strain>
    </source>
</reference>
<reference key="3">
    <citation type="journal article" date="1999" name="Plant Mol. Biol.">
        <title>Analysis of Arabidopsis genome sequence reveals a large new gene family in plants.</title>
        <authorList>
            <person name="Ride J.P."/>
            <person name="Davies E.M."/>
            <person name="Franklin F.C.H."/>
            <person name="Marshall D.F."/>
        </authorList>
    </citation>
    <scope>GENE FAMILY</scope>
    <scope>NOMENCLATURE</scope>
    <source>
        <strain>cv. Columbia</strain>
    </source>
</reference>
<proteinExistence type="inferred from homology"/>
<name>SPH4_ARATH</name>
<feature type="signal peptide" evidence="1">
    <location>
        <begin position="1"/>
        <end position="23"/>
    </location>
</feature>
<feature type="chain" id="PRO_5003316572" description="S-protein homolog 4">
    <location>
        <begin position="24"/>
        <end position="152"/>
    </location>
</feature>
<feature type="glycosylation site" description="N-linked (GlcNAc...) asparagine" evidence="2">
    <location>
        <position position="71"/>
    </location>
</feature>
<organism>
    <name type="scientific">Arabidopsis thaliana</name>
    <name type="common">Mouse-ear cress</name>
    <dbReference type="NCBI Taxonomy" id="3702"/>
    <lineage>
        <taxon>Eukaryota</taxon>
        <taxon>Viridiplantae</taxon>
        <taxon>Streptophyta</taxon>
        <taxon>Embryophyta</taxon>
        <taxon>Tracheophyta</taxon>
        <taxon>Spermatophyta</taxon>
        <taxon>Magnoliopsida</taxon>
        <taxon>eudicotyledons</taxon>
        <taxon>Gunneridae</taxon>
        <taxon>Pentapetalae</taxon>
        <taxon>rosids</taxon>
        <taxon>malvids</taxon>
        <taxon>Brassicales</taxon>
        <taxon>Brassicaceae</taxon>
        <taxon>Camelineae</taxon>
        <taxon>Arabidopsis</taxon>
    </lineage>
</organism>
<comment type="subcellular location">
    <subcellularLocation>
        <location evidence="5">Secreted</location>
    </subcellularLocation>
</comment>
<comment type="similarity">
    <text evidence="4">Belongs to the plant self-incompatibility (S1) protein family.</text>
</comment>
<comment type="sequence caution" evidence="4">
    <conflict type="erroneous initiation">
        <sequence resource="EMBL-CDS" id="BAB10025"/>
    </conflict>
    <text>Truncated N-terminus.</text>
</comment>
<evidence type="ECO:0000255" key="1"/>
<evidence type="ECO:0000255" key="2">
    <source>
        <dbReference type="PROSITE-ProRule" id="PRU00498"/>
    </source>
</evidence>
<evidence type="ECO:0000303" key="3">
    <source>
    </source>
</evidence>
<evidence type="ECO:0000305" key="4"/>
<evidence type="ECO:0000305" key="5">
    <source>
    </source>
</evidence>
<evidence type="ECO:0000312" key="6">
    <source>
        <dbReference type="Araport" id="AT5G12070"/>
    </source>
</evidence>
<keyword id="KW-0325">Glycoprotein</keyword>
<keyword id="KW-1185">Reference proteome</keyword>
<keyword id="KW-0964">Secreted</keyword>
<keyword id="KW-0713">Self-incompatibility</keyword>
<keyword id="KW-0732">Signal</keyword>